<dbReference type="EC" id="2.2.1.7" evidence="1"/>
<dbReference type="EMBL" id="CP000633">
    <property type="protein sequence ID" value="ACM35705.1"/>
    <property type="molecule type" value="Genomic_DNA"/>
</dbReference>
<dbReference type="RefSeq" id="WP_015915129.1">
    <property type="nucleotide sequence ID" value="NC_011989.1"/>
</dbReference>
<dbReference type="SMR" id="B9JSL2"/>
<dbReference type="STRING" id="311402.Avi_0997"/>
<dbReference type="KEGG" id="avi:Avi_0997"/>
<dbReference type="eggNOG" id="COG1154">
    <property type="taxonomic scope" value="Bacteria"/>
</dbReference>
<dbReference type="HOGENOM" id="CLU_009227_1_4_5"/>
<dbReference type="UniPathway" id="UPA00064">
    <property type="reaction ID" value="UER00091"/>
</dbReference>
<dbReference type="Proteomes" id="UP000001596">
    <property type="component" value="Chromosome 1"/>
</dbReference>
<dbReference type="GO" id="GO:0008661">
    <property type="term" value="F:1-deoxy-D-xylulose-5-phosphate synthase activity"/>
    <property type="evidence" value="ECO:0007669"/>
    <property type="project" value="UniProtKB-UniRule"/>
</dbReference>
<dbReference type="GO" id="GO:0000287">
    <property type="term" value="F:magnesium ion binding"/>
    <property type="evidence" value="ECO:0007669"/>
    <property type="project" value="UniProtKB-UniRule"/>
</dbReference>
<dbReference type="GO" id="GO:0030976">
    <property type="term" value="F:thiamine pyrophosphate binding"/>
    <property type="evidence" value="ECO:0007669"/>
    <property type="project" value="UniProtKB-UniRule"/>
</dbReference>
<dbReference type="GO" id="GO:0052865">
    <property type="term" value="P:1-deoxy-D-xylulose 5-phosphate biosynthetic process"/>
    <property type="evidence" value="ECO:0007669"/>
    <property type="project" value="UniProtKB-UniPathway"/>
</dbReference>
<dbReference type="GO" id="GO:0019682">
    <property type="term" value="P:glyceraldehyde-3-phosphate metabolic process"/>
    <property type="evidence" value="ECO:0007669"/>
    <property type="project" value="UniProtKB-ARBA"/>
</dbReference>
<dbReference type="GO" id="GO:0016114">
    <property type="term" value="P:terpenoid biosynthetic process"/>
    <property type="evidence" value="ECO:0007669"/>
    <property type="project" value="UniProtKB-UniRule"/>
</dbReference>
<dbReference type="GO" id="GO:0009228">
    <property type="term" value="P:thiamine biosynthetic process"/>
    <property type="evidence" value="ECO:0007669"/>
    <property type="project" value="UniProtKB-UniRule"/>
</dbReference>
<dbReference type="CDD" id="cd02007">
    <property type="entry name" value="TPP_DXS"/>
    <property type="match status" value="1"/>
</dbReference>
<dbReference type="CDD" id="cd07033">
    <property type="entry name" value="TPP_PYR_DXS_TK_like"/>
    <property type="match status" value="1"/>
</dbReference>
<dbReference type="FunFam" id="3.40.50.920:FF:000002">
    <property type="entry name" value="1-deoxy-D-xylulose-5-phosphate synthase"/>
    <property type="match status" value="1"/>
</dbReference>
<dbReference type="FunFam" id="3.40.50.970:FF:000005">
    <property type="entry name" value="1-deoxy-D-xylulose-5-phosphate synthase"/>
    <property type="match status" value="1"/>
</dbReference>
<dbReference type="Gene3D" id="3.40.50.920">
    <property type="match status" value="1"/>
</dbReference>
<dbReference type="Gene3D" id="3.40.50.970">
    <property type="match status" value="2"/>
</dbReference>
<dbReference type="HAMAP" id="MF_00315">
    <property type="entry name" value="DXP_synth"/>
    <property type="match status" value="1"/>
</dbReference>
<dbReference type="InterPro" id="IPR005477">
    <property type="entry name" value="Dxylulose-5-P_synthase"/>
</dbReference>
<dbReference type="InterPro" id="IPR029061">
    <property type="entry name" value="THDP-binding"/>
</dbReference>
<dbReference type="InterPro" id="IPR009014">
    <property type="entry name" value="Transketo_C/PFOR_II"/>
</dbReference>
<dbReference type="InterPro" id="IPR005475">
    <property type="entry name" value="Transketolase-like_Pyr-bd"/>
</dbReference>
<dbReference type="InterPro" id="IPR020826">
    <property type="entry name" value="Transketolase_BS"/>
</dbReference>
<dbReference type="InterPro" id="IPR033248">
    <property type="entry name" value="Transketolase_C"/>
</dbReference>
<dbReference type="InterPro" id="IPR049557">
    <property type="entry name" value="Transketolase_CS"/>
</dbReference>
<dbReference type="NCBIfam" id="TIGR00204">
    <property type="entry name" value="dxs"/>
    <property type="match status" value="1"/>
</dbReference>
<dbReference type="NCBIfam" id="NF003933">
    <property type="entry name" value="PRK05444.2-2"/>
    <property type="match status" value="1"/>
</dbReference>
<dbReference type="PANTHER" id="PTHR43322">
    <property type="entry name" value="1-D-DEOXYXYLULOSE 5-PHOSPHATE SYNTHASE-RELATED"/>
    <property type="match status" value="1"/>
</dbReference>
<dbReference type="PANTHER" id="PTHR43322:SF5">
    <property type="entry name" value="1-DEOXY-D-XYLULOSE-5-PHOSPHATE SYNTHASE, CHLOROPLASTIC"/>
    <property type="match status" value="1"/>
</dbReference>
<dbReference type="Pfam" id="PF13292">
    <property type="entry name" value="DXP_synthase_N"/>
    <property type="match status" value="1"/>
</dbReference>
<dbReference type="Pfam" id="PF02779">
    <property type="entry name" value="Transket_pyr"/>
    <property type="match status" value="1"/>
</dbReference>
<dbReference type="Pfam" id="PF02780">
    <property type="entry name" value="Transketolase_C"/>
    <property type="match status" value="1"/>
</dbReference>
<dbReference type="SMART" id="SM00861">
    <property type="entry name" value="Transket_pyr"/>
    <property type="match status" value="1"/>
</dbReference>
<dbReference type="SUPFAM" id="SSF52518">
    <property type="entry name" value="Thiamin diphosphate-binding fold (THDP-binding)"/>
    <property type="match status" value="2"/>
</dbReference>
<dbReference type="SUPFAM" id="SSF52922">
    <property type="entry name" value="TK C-terminal domain-like"/>
    <property type="match status" value="1"/>
</dbReference>
<dbReference type="PROSITE" id="PS00801">
    <property type="entry name" value="TRANSKETOLASE_1"/>
    <property type="match status" value="1"/>
</dbReference>
<dbReference type="PROSITE" id="PS00802">
    <property type="entry name" value="TRANSKETOLASE_2"/>
    <property type="match status" value="1"/>
</dbReference>
<gene>
    <name evidence="1" type="primary">dxs</name>
    <name type="ordered locus">Avi_0997</name>
</gene>
<protein>
    <recommendedName>
        <fullName evidence="1">1-deoxy-D-xylulose-5-phosphate synthase</fullName>
        <ecNumber evidence="1">2.2.1.7</ecNumber>
    </recommendedName>
    <alternativeName>
        <fullName evidence="1">1-deoxyxylulose-5-phosphate synthase</fullName>
        <shortName evidence="1">DXP synthase</shortName>
        <shortName evidence="1">DXPS</shortName>
    </alternativeName>
</protein>
<evidence type="ECO:0000255" key="1">
    <source>
        <dbReference type="HAMAP-Rule" id="MF_00315"/>
    </source>
</evidence>
<comment type="function">
    <text evidence="1">Catalyzes the acyloin condensation reaction between C atoms 2 and 3 of pyruvate and glyceraldehyde 3-phosphate to yield 1-deoxy-D-xylulose-5-phosphate (DXP).</text>
</comment>
<comment type="catalytic activity">
    <reaction evidence="1">
        <text>D-glyceraldehyde 3-phosphate + pyruvate + H(+) = 1-deoxy-D-xylulose 5-phosphate + CO2</text>
        <dbReference type="Rhea" id="RHEA:12605"/>
        <dbReference type="ChEBI" id="CHEBI:15361"/>
        <dbReference type="ChEBI" id="CHEBI:15378"/>
        <dbReference type="ChEBI" id="CHEBI:16526"/>
        <dbReference type="ChEBI" id="CHEBI:57792"/>
        <dbReference type="ChEBI" id="CHEBI:59776"/>
        <dbReference type="EC" id="2.2.1.7"/>
    </reaction>
</comment>
<comment type="cofactor">
    <cofactor evidence="1">
        <name>Mg(2+)</name>
        <dbReference type="ChEBI" id="CHEBI:18420"/>
    </cofactor>
    <text evidence="1">Binds 1 Mg(2+) ion per subunit.</text>
</comment>
<comment type="cofactor">
    <cofactor evidence="1">
        <name>thiamine diphosphate</name>
        <dbReference type="ChEBI" id="CHEBI:58937"/>
    </cofactor>
    <text evidence="1">Binds 1 thiamine pyrophosphate per subunit.</text>
</comment>
<comment type="pathway">
    <text evidence="1">Metabolic intermediate biosynthesis; 1-deoxy-D-xylulose 5-phosphate biosynthesis; 1-deoxy-D-xylulose 5-phosphate from D-glyceraldehyde 3-phosphate and pyruvate: step 1/1.</text>
</comment>
<comment type="subunit">
    <text evidence="1">Homodimer.</text>
</comment>
<comment type="similarity">
    <text evidence="1">Belongs to the transketolase family. DXPS subfamily.</text>
</comment>
<feature type="chain" id="PRO_1000132917" description="1-deoxy-D-xylulose-5-phosphate synthase">
    <location>
        <begin position="1"/>
        <end position="639"/>
    </location>
</feature>
<feature type="binding site" evidence="1">
    <location>
        <position position="79"/>
    </location>
    <ligand>
        <name>thiamine diphosphate</name>
        <dbReference type="ChEBI" id="CHEBI:58937"/>
    </ligand>
</feature>
<feature type="binding site" evidence="1">
    <location>
        <begin position="120"/>
        <end position="122"/>
    </location>
    <ligand>
        <name>thiamine diphosphate</name>
        <dbReference type="ChEBI" id="CHEBI:58937"/>
    </ligand>
</feature>
<feature type="binding site" evidence="1">
    <location>
        <position position="151"/>
    </location>
    <ligand>
        <name>Mg(2+)</name>
        <dbReference type="ChEBI" id="CHEBI:18420"/>
    </ligand>
</feature>
<feature type="binding site" evidence="1">
    <location>
        <begin position="152"/>
        <end position="153"/>
    </location>
    <ligand>
        <name>thiamine diphosphate</name>
        <dbReference type="ChEBI" id="CHEBI:58937"/>
    </ligand>
</feature>
<feature type="binding site" evidence="1">
    <location>
        <position position="180"/>
    </location>
    <ligand>
        <name>Mg(2+)</name>
        <dbReference type="ChEBI" id="CHEBI:18420"/>
    </ligand>
</feature>
<feature type="binding site" evidence="1">
    <location>
        <position position="180"/>
    </location>
    <ligand>
        <name>thiamine diphosphate</name>
        <dbReference type="ChEBI" id="CHEBI:58937"/>
    </ligand>
</feature>
<feature type="binding site" evidence="1">
    <location>
        <position position="289"/>
    </location>
    <ligand>
        <name>thiamine diphosphate</name>
        <dbReference type="ChEBI" id="CHEBI:58937"/>
    </ligand>
</feature>
<feature type="binding site" evidence="1">
    <location>
        <position position="371"/>
    </location>
    <ligand>
        <name>thiamine diphosphate</name>
        <dbReference type="ChEBI" id="CHEBI:58937"/>
    </ligand>
</feature>
<name>DXS_ALLAM</name>
<reference key="1">
    <citation type="journal article" date="2009" name="J. Bacteriol.">
        <title>Genome sequences of three Agrobacterium biovars help elucidate the evolution of multichromosome genomes in bacteria.</title>
        <authorList>
            <person name="Slater S.C."/>
            <person name="Goldman B.S."/>
            <person name="Goodner B."/>
            <person name="Setubal J.C."/>
            <person name="Farrand S.K."/>
            <person name="Nester E.W."/>
            <person name="Burr T.J."/>
            <person name="Banta L."/>
            <person name="Dickerman A.W."/>
            <person name="Paulsen I."/>
            <person name="Otten L."/>
            <person name="Suen G."/>
            <person name="Welch R."/>
            <person name="Almeida N.F."/>
            <person name="Arnold F."/>
            <person name="Burton O.T."/>
            <person name="Du Z."/>
            <person name="Ewing A."/>
            <person name="Godsy E."/>
            <person name="Heisel S."/>
            <person name="Houmiel K.L."/>
            <person name="Jhaveri J."/>
            <person name="Lu J."/>
            <person name="Miller N.M."/>
            <person name="Norton S."/>
            <person name="Chen Q."/>
            <person name="Phoolcharoen W."/>
            <person name="Ohlin V."/>
            <person name="Ondrusek D."/>
            <person name="Pride N."/>
            <person name="Stricklin S.L."/>
            <person name="Sun J."/>
            <person name="Wheeler C."/>
            <person name="Wilson L."/>
            <person name="Zhu H."/>
            <person name="Wood D.W."/>
        </authorList>
    </citation>
    <scope>NUCLEOTIDE SEQUENCE [LARGE SCALE GENOMIC DNA]</scope>
    <source>
        <strain>ATCC BAA-846 / DSM 112012 / S4</strain>
    </source>
</reference>
<proteinExistence type="inferred from homology"/>
<organism>
    <name type="scientific">Allorhizobium ampelinum (strain ATCC BAA-846 / DSM 112012 / S4)</name>
    <name type="common">Agrobacterium vitis (strain S4)</name>
    <dbReference type="NCBI Taxonomy" id="311402"/>
    <lineage>
        <taxon>Bacteria</taxon>
        <taxon>Pseudomonadati</taxon>
        <taxon>Pseudomonadota</taxon>
        <taxon>Alphaproteobacteria</taxon>
        <taxon>Hyphomicrobiales</taxon>
        <taxon>Rhizobiaceae</taxon>
        <taxon>Rhizobium/Agrobacterium group</taxon>
        <taxon>Allorhizobium</taxon>
        <taxon>Allorhizobium ampelinum</taxon>
    </lineage>
</organism>
<keyword id="KW-0414">Isoprene biosynthesis</keyword>
<keyword id="KW-0460">Magnesium</keyword>
<keyword id="KW-0479">Metal-binding</keyword>
<keyword id="KW-1185">Reference proteome</keyword>
<keyword id="KW-0784">Thiamine biosynthesis</keyword>
<keyword id="KW-0786">Thiamine pyrophosphate</keyword>
<keyword id="KW-0808">Transferase</keyword>
<sequence length="639" mass="68348">MTSKPNTPLLDQVVFPSDLRKIEDKDMPQVARELRDEMIDAVSVTGGHLGAGLGVVELTLAIHKVFNTPEDRLIFDVGHQCYPHKILTGRRERIRTLRQEHGLSGFTKRAESEYDPFGAAHSSTSISAGLGMAVAAELGQTDRKVIAVIGDGAMSAGMAFEALNNAGALDARLIVILNDNDMSIAPPTGAMSAYLARLASGRTYMGMREIGKKLTAYLGKNIDRAITRAVEHARGYVTGGTMFEEMGFYHIGPIDGHSFDHLLPVLRNVRDNAKGPVLIHVVTQKGKGYAPAEAAADKYHGVNTFDVITGTQAKAKPNAPSYTAVFADALVEEARLDDKIVGITAAMPSGTGLDKLQNLFPERTFDVGIAEQHAVTFAAGLAAEGYKPFCALYSTFLQRGYDQVVHDVAIQGLPVRFPIDRAGFVGADGPTHAGSFDTGFLASLPGFVVMAAADEAELKHMVRTAAAYDEGPISFRYPRGEGVGVQMPERGEILPIGKGRIIKEGSKVALLSFGTRLAECLVAAEDLDAAGLPTTVADARFAKPLDLDLIRQLARHHAVLITVEEGAVGGFGSQVLHMLANEGLLDHGLKVRSLVLPDLWMDQAKPDVMYEKAGLDAKGIVSTVFTALSRDALAQDSLA</sequence>
<accession>B9JSL2</accession>